<protein>
    <recommendedName>
        <fullName evidence="1">ATP synthase gamma chain</fullName>
    </recommendedName>
    <alternativeName>
        <fullName evidence="1">ATP synthase F1 sector gamma subunit</fullName>
    </alternativeName>
    <alternativeName>
        <fullName evidence="1">F-ATPase gamma subunit</fullName>
    </alternativeName>
</protein>
<dbReference type="EMBL" id="CP000362">
    <property type="protein sequence ID" value="ABG33015.1"/>
    <property type="molecule type" value="Genomic_DNA"/>
</dbReference>
<dbReference type="RefSeq" id="WP_011569628.1">
    <property type="nucleotide sequence ID" value="NC_008209.1"/>
</dbReference>
<dbReference type="SMR" id="Q162S8"/>
<dbReference type="STRING" id="375451.RD1_3534"/>
<dbReference type="KEGG" id="rde:RD1_3534"/>
<dbReference type="eggNOG" id="COG0224">
    <property type="taxonomic scope" value="Bacteria"/>
</dbReference>
<dbReference type="HOGENOM" id="CLU_050669_0_1_5"/>
<dbReference type="OrthoDB" id="9812769at2"/>
<dbReference type="Proteomes" id="UP000007029">
    <property type="component" value="Chromosome"/>
</dbReference>
<dbReference type="GO" id="GO:0005886">
    <property type="term" value="C:plasma membrane"/>
    <property type="evidence" value="ECO:0007669"/>
    <property type="project" value="UniProtKB-SubCell"/>
</dbReference>
<dbReference type="GO" id="GO:0045259">
    <property type="term" value="C:proton-transporting ATP synthase complex"/>
    <property type="evidence" value="ECO:0007669"/>
    <property type="project" value="UniProtKB-KW"/>
</dbReference>
<dbReference type="GO" id="GO:0005524">
    <property type="term" value="F:ATP binding"/>
    <property type="evidence" value="ECO:0007669"/>
    <property type="project" value="UniProtKB-UniRule"/>
</dbReference>
<dbReference type="GO" id="GO:0046933">
    <property type="term" value="F:proton-transporting ATP synthase activity, rotational mechanism"/>
    <property type="evidence" value="ECO:0007669"/>
    <property type="project" value="UniProtKB-UniRule"/>
</dbReference>
<dbReference type="GO" id="GO:0042777">
    <property type="term" value="P:proton motive force-driven plasma membrane ATP synthesis"/>
    <property type="evidence" value="ECO:0007669"/>
    <property type="project" value="UniProtKB-UniRule"/>
</dbReference>
<dbReference type="CDD" id="cd12151">
    <property type="entry name" value="F1-ATPase_gamma"/>
    <property type="match status" value="1"/>
</dbReference>
<dbReference type="FunFam" id="1.10.287.80:FF:000001">
    <property type="entry name" value="ATP synthase gamma chain"/>
    <property type="match status" value="1"/>
</dbReference>
<dbReference type="FunFam" id="1.10.287.80:FF:000003">
    <property type="entry name" value="ATP synthase gamma chain, chloroplastic"/>
    <property type="match status" value="1"/>
</dbReference>
<dbReference type="Gene3D" id="3.40.1380.10">
    <property type="match status" value="1"/>
</dbReference>
<dbReference type="Gene3D" id="1.10.287.80">
    <property type="entry name" value="ATP synthase, gamma subunit, helix hairpin domain"/>
    <property type="match status" value="1"/>
</dbReference>
<dbReference type="HAMAP" id="MF_00815">
    <property type="entry name" value="ATP_synth_gamma_bact"/>
    <property type="match status" value="1"/>
</dbReference>
<dbReference type="InterPro" id="IPR035968">
    <property type="entry name" value="ATP_synth_F1_ATPase_gsu"/>
</dbReference>
<dbReference type="InterPro" id="IPR000131">
    <property type="entry name" value="ATP_synth_F1_gsu"/>
</dbReference>
<dbReference type="InterPro" id="IPR023632">
    <property type="entry name" value="ATP_synth_F1_gsu_CS"/>
</dbReference>
<dbReference type="NCBIfam" id="TIGR01146">
    <property type="entry name" value="ATPsyn_F1gamma"/>
    <property type="match status" value="1"/>
</dbReference>
<dbReference type="NCBIfam" id="NF004146">
    <property type="entry name" value="PRK05621.1-4"/>
    <property type="match status" value="1"/>
</dbReference>
<dbReference type="PANTHER" id="PTHR11693">
    <property type="entry name" value="ATP SYNTHASE GAMMA CHAIN"/>
    <property type="match status" value="1"/>
</dbReference>
<dbReference type="PANTHER" id="PTHR11693:SF22">
    <property type="entry name" value="ATP SYNTHASE SUBUNIT GAMMA, MITOCHONDRIAL"/>
    <property type="match status" value="1"/>
</dbReference>
<dbReference type="Pfam" id="PF00231">
    <property type="entry name" value="ATP-synt"/>
    <property type="match status" value="1"/>
</dbReference>
<dbReference type="PIRSF" id="PIRSF039089">
    <property type="entry name" value="ATP_synthase_gamma"/>
    <property type="match status" value="1"/>
</dbReference>
<dbReference type="PRINTS" id="PR00126">
    <property type="entry name" value="ATPASEGAMMA"/>
</dbReference>
<dbReference type="SUPFAM" id="SSF52943">
    <property type="entry name" value="ATP synthase (F1-ATPase), gamma subunit"/>
    <property type="match status" value="1"/>
</dbReference>
<dbReference type="PROSITE" id="PS00153">
    <property type="entry name" value="ATPASE_GAMMA"/>
    <property type="match status" value="1"/>
</dbReference>
<keyword id="KW-0066">ATP synthesis</keyword>
<keyword id="KW-0997">Cell inner membrane</keyword>
<keyword id="KW-1003">Cell membrane</keyword>
<keyword id="KW-0139">CF(1)</keyword>
<keyword id="KW-0375">Hydrogen ion transport</keyword>
<keyword id="KW-0406">Ion transport</keyword>
<keyword id="KW-0472">Membrane</keyword>
<keyword id="KW-1185">Reference proteome</keyword>
<keyword id="KW-0813">Transport</keyword>
<sequence length="291" mass="31605">MPSLKDLKNRIESVKSTRKITKAMQMVAAAKLRRAQEAAEQSRPYTERFNAVMAGLAASVGGSDSAPKLLSGTGSDKVQLLIVMTSERGLCGGFNTNIAKLARAHAQKLQGEGKDVKILTVGKKGRDQLKRDLGSLFIGHVDLTEIKRVSYVDAQGIAKDVLNRFDVGEFDVATIFYAKFVNVVSQIPTAQQIIPAKFEQQEGEEASTLFDYEPDEEAILADLLPRGVATQIFSALLENGASEQGARMSAMDNATRNAGEMIENLTIEFNRSRQAVITNELIEIISGAEAL</sequence>
<name>ATPG_ROSDO</name>
<feature type="chain" id="PRO_1000053317" description="ATP synthase gamma chain">
    <location>
        <begin position="1"/>
        <end position="291"/>
    </location>
</feature>
<organism>
    <name type="scientific">Roseobacter denitrificans (strain ATCC 33942 / OCh 114)</name>
    <name type="common">Erythrobacter sp. (strain OCh 114)</name>
    <name type="synonym">Roseobacter denitrificans</name>
    <dbReference type="NCBI Taxonomy" id="375451"/>
    <lineage>
        <taxon>Bacteria</taxon>
        <taxon>Pseudomonadati</taxon>
        <taxon>Pseudomonadota</taxon>
        <taxon>Alphaproteobacteria</taxon>
        <taxon>Rhodobacterales</taxon>
        <taxon>Roseobacteraceae</taxon>
        <taxon>Roseobacter</taxon>
    </lineage>
</organism>
<reference key="1">
    <citation type="journal article" date="2007" name="J. Bacteriol.">
        <title>The complete genome sequence of Roseobacter denitrificans reveals a mixotrophic rather than photosynthetic metabolism.</title>
        <authorList>
            <person name="Swingley W.D."/>
            <person name="Sadekar S."/>
            <person name="Mastrian S.D."/>
            <person name="Matthies H.J."/>
            <person name="Hao J."/>
            <person name="Ramos H."/>
            <person name="Acharya C.R."/>
            <person name="Conrad A.L."/>
            <person name="Taylor H.L."/>
            <person name="Dejesa L.C."/>
            <person name="Shah M.K."/>
            <person name="O'Huallachain M.E."/>
            <person name="Lince M.T."/>
            <person name="Blankenship R.E."/>
            <person name="Beatty J.T."/>
            <person name="Touchman J.W."/>
        </authorList>
    </citation>
    <scope>NUCLEOTIDE SEQUENCE [LARGE SCALE GENOMIC DNA]</scope>
    <source>
        <strain>ATCC 33942 / OCh 114</strain>
    </source>
</reference>
<comment type="function">
    <text evidence="1">Produces ATP from ADP in the presence of a proton gradient across the membrane. The gamma chain is believed to be important in regulating ATPase activity and the flow of protons through the CF(0) complex.</text>
</comment>
<comment type="subunit">
    <text evidence="1">F-type ATPases have 2 components, CF(1) - the catalytic core - and CF(0) - the membrane proton channel. CF(1) has five subunits: alpha(3), beta(3), gamma(1), delta(1), epsilon(1). CF(0) has three main subunits: a, b and c.</text>
</comment>
<comment type="subcellular location">
    <subcellularLocation>
        <location evidence="1">Cell inner membrane</location>
        <topology evidence="1">Peripheral membrane protein</topology>
    </subcellularLocation>
</comment>
<comment type="similarity">
    <text evidence="1">Belongs to the ATPase gamma chain family.</text>
</comment>
<gene>
    <name evidence="1" type="primary">atpG</name>
    <name type="ordered locus">RD1_3534</name>
</gene>
<accession>Q162S8</accession>
<proteinExistence type="inferred from homology"/>
<evidence type="ECO:0000255" key="1">
    <source>
        <dbReference type="HAMAP-Rule" id="MF_00815"/>
    </source>
</evidence>